<proteinExistence type="inferred from homology"/>
<organism>
    <name type="scientific">Coxiella burnetii (strain Dugway 5J108-111)</name>
    <dbReference type="NCBI Taxonomy" id="434922"/>
    <lineage>
        <taxon>Bacteria</taxon>
        <taxon>Pseudomonadati</taxon>
        <taxon>Pseudomonadota</taxon>
        <taxon>Gammaproteobacteria</taxon>
        <taxon>Legionellales</taxon>
        <taxon>Coxiellaceae</taxon>
        <taxon>Coxiella</taxon>
    </lineage>
</organism>
<comment type="function">
    <text evidence="1">Activates KDO (a required 8-carbon sugar) for incorporation into bacterial lipopolysaccharide in Gram-negative bacteria.</text>
</comment>
<comment type="catalytic activity">
    <reaction evidence="1">
        <text>3-deoxy-alpha-D-manno-oct-2-ulosonate + CTP = CMP-3-deoxy-beta-D-manno-octulosonate + diphosphate</text>
        <dbReference type="Rhea" id="RHEA:23448"/>
        <dbReference type="ChEBI" id="CHEBI:33019"/>
        <dbReference type="ChEBI" id="CHEBI:37563"/>
        <dbReference type="ChEBI" id="CHEBI:85986"/>
        <dbReference type="ChEBI" id="CHEBI:85987"/>
        <dbReference type="EC" id="2.7.7.38"/>
    </reaction>
</comment>
<comment type="pathway">
    <text evidence="1">Nucleotide-sugar biosynthesis; CMP-3-deoxy-D-manno-octulosonate biosynthesis; CMP-3-deoxy-D-manno-octulosonate from 3-deoxy-D-manno-octulosonate and CTP: step 1/1.</text>
</comment>
<comment type="pathway">
    <text evidence="1">Bacterial outer membrane biogenesis; lipopolysaccharide biosynthesis.</text>
</comment>
<comment type="subcellular location">
    <subcellularLocation>
        <location evidence="1">Cytoplasm</location>
    </subcellularLocation>
</comment>
<comment type="similarity">
    <text evidence="1">Belongs to the KdsB family.</text>
</comment>
<comment type="sequence caution" evidence="2">
    <conflict type="erroneous initiation">
        <sequence resource="EMBL-CDS" id="ABS77966"/>
    </conflict>
</comment>
<keyword id="KW-0963">Cytoplasm</keyword>
<keyword id="KW-0448">Lipopolysaccharide biosynthesis</keyword>
<keyword id="KW-0548">Nucleotidyltransferase</keyword>
<keyword id="KW-0808">Transferase</keyword>
<accession>A9KEB5</accession>
<evidence type="ECO:0000255" key="1">
    <source>
        <dbReference type="HAMAP-Rule" id="MF_00057"/>
    </source>
</evidence>
<evidence type="ECO:0000305" key="2"/>
<name>KDSB_COXBN</name>
<protein>
    <recommendedName>
        <fullName evidence="1">3-deoxy-manno-octulosonate cytidylyltransferase</fullName>
        <ecNumber evidence="1">2.7.7.38</ecNumber>
    </recommendedName>
    <alternativeName>
        <fullName evidence="1">CMP-2-keto-3-deoxyoctulosonic acid synthase</fullName>
        <shortName evidence="1">CKS</shortName>
        <shortName evidence="1">CMP-KDO synthase</shortName>
    </alternativeName>
</protein>
<reference key="1">
    <citation type="journal article" date="2009" name="Infect. Immun.">
        <title>Comparative genomics reveal extensive transposon-mediated genomic plasticity and diversity among potential effector proteins within the genus Coxiella.</title>
        <authorList>
            <person name="Beare P.A."/>
            <person name="Unsworth N."/>
            <person name="Andoh M."/>
            <person name="Voth D.E."/>
            <person name="Omsland A."/>
            <person name="Gilk S.D."/>
            <person name="Williams K.P."/>
            <person name="Sobral B.W."/>
            <person name="Kupko J.J. III"/>
            <person name="Porcella S.F."/>
            <person name="Samuel J.E."/>
            <person name="Heinzen R.A."/>
        </authorList>
    </citation>
    <scope>NUCLEOTIDE SEQUENCE [LARGE SCALE GENOMIC DNA]</scope>
    <source>
        <strain>Dugway 5J108-111</strain>
    </source>
</reference>
<feature type="chain" id="PRO_0000370054" description="3-deoxy-manno-octulosonate cytidylyltransferase">
    <location>
        <begin position="1"/>
        <end position="249"/>
    </location>
</feature>
<gene>
    <name evidence="1" type="primary">kdsB</name>
    <name type="ordered locus">CBUD_1596</name>
</gene>
<dbReference type="EC" id="2.7.7.38" evidence="1"/>
<dbReference type="EMBL" id="CP000733">
    <property type="protein sequence ID" value="ABS77966.2"/>
    <property type="status" value="ALT_INIT"/>
    <property type="molecule type" value="Genomic_DNA"/>
</dbReference>
<dbReference type="SMR" id="A9KEB5"/>
<dbReference type="KEGG" id="cbd:CBUD_1596"/>
<dbReference type="HOGENOM" id="CLU_065038_1_0_6"/>
<dbReference type="UniPathway" id="UPA00030"/>
<dbReference type="UniPathway" id="UPA00358">
    <property type="reaction ID" value="UER00476"/>
</dbReference>
<dbReference type="Proteomes" id="UP000008555">
    <property type="component" value="Chromosome"/>
</dbReference>
<dbReference type="GO" id="GO:0005829">
    <property type="term" value="C:cytosol"/>
    <property type="evidence" value="ECO:0007669"/>
    <property type="project" value="TreeGrafter"/>
</dbReference>
<dbReference type="GO" id="GO:0008690">
    <property type="term" value="F:3-deoxy-manno-octulosonate cytidylyltransferase activity"/>
    <property type="evidence" value="ECO:0007669"/>
    <property type="project" value="UniProtKB-UniRule"/>
</dbReference>
<dbReference type="GO" id="GO:0033468">
    <property type="term" value="P:CMP-keto-3-deoxy-D-manno-octulosonic acid biosynthetic process"/>
    <property type="evidence" value="ECO:0007669"/>
    <property type="project" value="UniProtKB-UniRule"/>
</dbReference>
<dbReference type="GO" id="GO:0009103">
    <property type="term" value="P:lipopolysaccharide biosynthetic process"/>
    <property type="evidence" value="ECO:0007669"/>
    <property type="project" value="UniProtKB-UniRule"/>
</dbReference>
<dbReference type="CDD" id="cd02517">
    <property type="entry name" value="CMP-KDO-Synthetase"/>
    <property type="match status" value="1"/>
</dbReference>
<dbReference type="FunFam" id="3.90.550.10:FF:000011">
    <property type="entry name" value="3-deoxy-manno-octulosonate cytidylyltransferase"/>
    <property type="match status" value="1"/>
</dbReference>
<dbReference type="Gene3D" id="3.90.550.10">
    <property type="entry name" value="Spore Coat Polysaccharide Biosynthesis Protein SpsA, Chain A"/>
    <property type="match status" value="1"/>
</dbReference>
<dbReference type="HAMAP" id="MF_00057">
    <property type="entry name" value="KdsB"/>
    <property type="match status" value="1"/>
</dbReference>
<dbReference type="InterPro" id="IPR003329">
    <property type="entry name" value="Cytidylyl_trans"/>
</dbReference>
<dbReference type="InterPro" id="IPR004528">
    <property type="entry name" value="KdsB"/>
</dbReference>
<dbReference type="InterPro" id="IPR029044">
    <property type="entry name" value="Nucleotide-diphossugar_trans"/>
</dbReference>
<dbReference type="NCBIfam" id="TIGR00466">
    <property type="entry name" value="kdsB"/>
    <property type="match status" value="1"/>
</dbReference>
<dbReference type="NCBIfam" id="NF003950">
    <property type="entry name" value="PRK05450.1-3"/>
    <property type="match status" value="1"/>
</dbReference>
<dbReference type="NCBIfam" id="NF003952">
    <property type="entry name" value="PRK05450.1-5"/>
    <property type="match status" value="1"/>
</dbReference>
<dbReference type="NCBIfam" id="NF009905">
    <property type="entry name" value="PRK13368.1"/>
    <property type="match status" value="1"/>
</dbReference>
<dbReference type="PANTHER" id="PTHR42866">
    <property type="entry name" value="3-DEOXY-MANNO-OCTULOSONATE CYTIDYLYLTRANSFERASE"/>
    <property type="match status" value="1"/>
</dbReference>
<dbReference type="PANTHER" id="PTHR42866:SF2">
    <property type="entry name" value="3-DEOXY-MANNO-OCTULOSONATE CYTIDYLYLTRANSFERASE, MITOCHONDRIAL"/>
    <property type="match status" value="1"/>
</dbReference>
<dbReference type="Pfam" id="PF02348">
    <property type="entry name" value="CTP_transf_3"/>
    <property type="match status" value="1"/>
</dbReference>
<dbReference type="SUPFAM" id="SSF53448">
    <property type="entry name" value="Nucleotide-diphospho-sugar transferases"/>
    <property type="match status" value="1"/>
</dbReference>
<sequence>MEFRVIIPARFDSTRLPGKALVDIAGKPMIQHVYESAIKSGAEEVVIATDDKRIRQVAEDFGAVVCMTSSDHQSGTERIAEAAVALGFEDDEIIVCLQGDEPLIPPDAIRKLAEDLDEHDNVKVASLCTPITEVDELFNPHSTKVVLNRRNYALYFSHAPIPWGRDTFSDKENLQLNGSHYRHVGIYAYRVGFLEEYLSWDACPAEKMEALEQLRILWHGGRIHMVVAKSKCPPGVDTEEDLERVRAYF</sequence>